<comment type="function">
    <text>This protein has transforming activity in vitro.</text>
</comment>
<comment type="function">
    <text evidence="1">Plays a major role in the induction and maintenance of cellular transformation. Acts mainly as an oncoprotein by stimulating the destruction of many host cell key regulatory proteins. E6 associates with host UBE3A/E6-AP ubiquitin-protein ligase, and inactivates tumor suppressors TP53 and TP73 by targeting them to the 26S proteasome for degradation. In turn, DNA damage and chromosomal instabilities increase and lead to cell proliferation and cancer development. The complex E6/E6AP targets several other substrates to degradation via the proteasome including host DLG1 or NFX1, a repressor of human telomerase reverse transcriptase (hTERT). The resulting increased expression of hTERT prevents the shortening of telomere length leading to cell immortalization. Other cellular targets including BAK1, Fas-associated death domain-containing protein (FADD) and procaspase 8, are degraded by E6/E6AP causing inhibition of apoptosis. E6 also inhibits immune response by interacting with host IRF3 and TYK2. These interactions prevent IRF3 transcriptional activities and inhibit TYK2-mediated JAK-STAT activation by interferon alpha resulting in inhibition of the interferon signaling pathway.</text>
</comment>
<comment type="subunit">
    <text evidence="1">Forms homodimers. Interacts with ubiquitin-protein ligase UBE3A/E6-AP and thus forms a complex with human TP53. Interacts with human NFX1 and MAGI3. Interacts with human IRF3; this interaction inhibits the establishment of antiviral state. Interacts with human TYK2; this interaction inhibits JAK-STAT activation by interferon alpha. Interacts with host DLG1; this interaction leads to the proteasomal degradation of DLG1.</text>
</comment>
<comment type="interaction">
    <interactant intactId="EBI-11793794">
        <id>P21735</id>
    </interactant>
    <interactant intactId="EBI-357481">
        <id>Q12959</id>
        <label>DLG1</label>
    </interactant>
    <organismsDiffer>true</organismsDiffer>
    <experiments>2</experiments>
</comment>
<comment type="subcellular location">
    <subcellularLocation>
        <location evidence="1">Host cytoplasm</location>
    </subcellularLocation>
    <subcellularLocation>
        <location evidence="1">Host nucleus</location>
    </subcellularLocation>
</comment>
<comment type="miscellaneous">
    <text evidence="1">Belongs to the high risk human alphapapillomavirus family. The cancer-causing human papillomavirus E6 protein has a unique carboxy terminal PDZ domain containing substrate.</text>
</comment>
<comment type="similarity">
    <text evidence="2">Belongs to the papillomaviridae E6 protein family.</text>
</comment>
<keyword id="KW-0010">Activator</keyword>
<keyword id="KW-0238">DNA-binding</keyword>
<keyword id="KW-0244">Early protein</keyword>
<keyword id="KW-1035">Host cytoplasm</keyword>
<keyword id="KW-1048">Host nucleus</keyword>
<keyword id="KW-0945">Host-virus interaction</keyword>
<keyword id="KW-1090">Inhibition of host innate immune response by virus</keyword>
<keyword id="KW-1092">Inhibition of host IRF3 by virus</keyword>
<keyword id="KW-1113">Inhibition of host RLR pathway by virus</keyword>
<keyword id="KW-0479">Metal-binding</keyword>
<keyword id="KW-1119">Modulation of host cell apoptosis by virus</keyword>
<keyword id="KW-0553">Oncogene</keyword>
<keyword id="KW-0804">Transcription</keyword>
<keyword id="KW-0805">Transcription regulation</keyword>
<keyword id="KW-0899">Viral immunoevasion</keyword>
<keyword id="KW-0862">Zinc</keyword>
<keyword id="KW-0863">Zinc-finger</keyword>
<organismHost>
    <name type="scientific">Homo sapiens</name>
    <name type="common">Human</name>
    <dbReference type="NCBI Taxonomy" id="9606"/>
</organismHost>
<accession>P21735</accession>
<proteinExistence type="evidence at protein level"/>
<feature type="chain" id="PRO_0000133364" description="Protein E6">
    <location>
        <begin position="1"/>
        <end position="158"/>
    </location>
</feature>
<feature type="zinc finger region" evidence="1">
    <location>
        <begin position="32"/>
        <end position="68"/>
    </location>
</feature>
<feature type="zinc finger region" evidence="1">
    <location>
        <begin position="105"/>
        <end position="141"/>
    </location>
</feature>
<feature type="short sequence motif" description="PDZ-binding domain" evidence="1">
    <location>
        <begin position="156"/>
        <end position="158"/>
    </location>
</feature>
<feature type="sequence conflict" description="In Ref. 2; AAA46973." evidence="2" ref="2">
    <original>R</original>
    <variation>P</variation>
    <location>
        <position position="10"/>
    </location>
</feature>
<feature type="sequence conflict" description="In Ref. 2; AAA46973." evidence="2" ref="2">
    <original>I</original>
    <variation>N</variation>
    <location>
        <position position="30"/>
    </location>
</feature>
<feature type="sequence conflict" description="In Ref. 2; AAA46973." evidence="2" ref="2">
    <original>R</original>
    <variation>A</variation>
    <location>
        <position position="118"/>
    </location>
</feature>
<gene>
    <name evidence="1" type="primary">E6</name>
</gene>
<evidence type="ECO:0000255" key="1">
    <source>
        <dbReference type="HAMAP-Rule" id="MF_04006"/>
    </source>
</evidence>
<evidence type="ECO:0000305" key="2"/>
<protein>
    <recommendedName>
        <fullName evidence="1">Protein E6</fullName>
    </recommendedName>
</protein>
<name>VE6_HPV45</name>
<dbReference type="EMBL" id="X74479">
    <property type="protein sequence ID" value="CAA52573.1"/>
    <property type="molecule type" value="Genomic_DNA"/>
</dbReference>
<dbReference type="EMBL" id="M38198">
    <property type="protein sequence ID" value="AAA46973.1"/>
    <property type="molecule type" value="Genomic_DNA"/>
</dbReference>
<dbReference type="PIR" id="S36561">
    <property type="entry name" value="S36561"/>
</dbReference>
<dbReference type="SMR" id="P21735"/>
<dbReference type="IntAct" id="P21735">
    <property type="interactions" value="2"/>
</dbReference>
<dbReference type="MINT" id="P21735"/>
<dbReference type="Proteomes" id="UP000008695">
    <property type="component" value="Genome"/>
</dbReference>
<dbReference type="GO" id="GO:0030430">
    <property type="term" value="C:host cell cytoplasm"/>
    <property type="evidence" value="ECO:0007669"/>
    <property type="project" value="UniProtKB-SubCell"/>
</dbReference>
<dbReference type="GO" id="GO:0042025">
    <property type="term" value="C:host cell nucleus"/>
    <property type="evidence" value="ECO:0007669"/>
    <property type="project" value="UniProtKB-SubCell"/>
</dbReference>
<dbReference type="GO" id="GO:0003677">
    <property type="term" value="F:DNA binding"/>
    <property type="evidence" value="ECO:0007669"/>
    <property type="project" value="UniProtKB-UniRule"/>
</dbReference>
<dbReference type="GO" id="GO:0030165">
    <property type="term" value="F:PDZ domain binding"/>
    <property type="evidence" value="ECO:0007669"/>
    <property type="project" value="UniProtKB-UniRule"/>
</dbReference>
<dbReference type="GO" id="GO:0008270">
    <property type="term" value="F:zinc ion binding"/>
    <property type="evidence" value="ECO:0007669"/>
    <property type="project" value="UniProtKB-KW"/>
</dbReference>
<dbReference type="GO" id="GO:0006351">
    <property type="term" value="P:DNA-templated transcription"/>
    <property type="evidence" value="ECO:0007669"/>
    <property type="project" value="UniProtKB-UniRule"/>
</dbReference>
<dbReference type="GO" id="GO:0006355">
    <property type="term" value="P:regulation of DNA-templated transcription"/>
    <property type="evidence" value="ECO:0007669"/>
    <property type="project" value="UniProtKB-UniRule"/>
</dbReference>
<dbReference type="GO" id="GO:0052150">
    <property type="term" value="P:symbiont-mediated perturbation of host apoptosis"/>
    <property type="evidence" value="ECO:0007669"/>
    <property type="project" value="UniProtKB-KW"/>
</dbReference>
<dbReference type="GO" id="GO:0039648">
    <property type="term" value="P:symbiont-mediated perturbation of host ubiquitin-like protein modification"/>
    <property type="evidence" value="ECO:0007669"/>
    <property type="project" value="UniProtKB-UniRule"/>
</dbReference>
<dbReference type="GO" id="GO:0039548">
    <property type="term" value="P:symbiont-mediated suppression of host cytoplasmic pattern recognition receptor signaling pathway via inhibition of IRF3 activity"/>
    <property type="evidence" value="ECO:0007669"/>
    <property type="project" value="UniProtKB-UniRule"/>
</dbReference>
<dbReference type="GO" id="GO:0039502">
    <property type="term" value="P:symbiont-mediated suppression of host type I interferon-mediated signaling pathway"/>
    <property type="evidence" value="ECO:0007669"/>
    <property type="project" value="UniProtKB-UniRule"/>
</dbReference>
<dbReference type="FunFam" id="3.30.240.40:FF:000001">
    <property type="entry name" value="Protein E6"/>
    <property type="match status" value="1"/>
</dbReference>
<dbReference type="FunFam" id="3.30.240.40:FF:000002">
    <property type="entry name" value="Protein E6"/>
    <property type="match status" value="1"/>
</dbReference>
<dbReference type="Gene3D" id="3.30.240.40">
    <property type="entry name" value="E6 early regulatory protein"/>
    <property type="match status" value="2"/>
</dbReference>
<dbReference type="HAMAP" id="MF_04006">
    <property type="entry name" value="HPV_E6"/>
    <property type="match status" value="1"/>
</dbReference>
<dbReference type="InterPro" id="IPR001334">
    <property type="entry name" value="E6"/>
</dbReference>
<dbReference type="InterPro" id="IPR038575">
    <property type="entry name" value="E6_sf"/>
</dbReference>
<dbReference type="Pfam" id="PF00518">
    <property type="entry name" value="E6"/>
    <property type="match status" value="1"/>
</dbReference>
<dbReference type="SUPFAM" id="SSF161229">
    <property type="entry name" value="E6 C-terminal domain-like"/>
    <property type="match status" value="2"/>
</dbReference>
<reference key="1">
    <citation type="journal article" date="1994" name="Curr. Top. Microbiol. Immunol.">
        <title>Primer-directed sequencing of human papillomavirus types.</title>
        <authorList>
            <person name="Delius H."/>
            <person name="Hofmann B."/>
        </authorList>
    </citation>
    <scope>NUCLEOTIDE SEQUENCE [GENOMIC DNA]</scope>
</reference>
<reference key="2">
    <citation type="submission" date="1990-08" db="EMBL/GenBank/DDBJ databases">
        <authorList>
            <person name="Kaplan J.B."/>
            <person name="Burk R.D."/>
        </authorList>
    </citation>
    <scope>NUCLEOTIDE SEQUENCE [GENOMIC DNA]</scope>
</reference>
<organism>
    <name type="scientific">Human papillomavirus 45</name>
    <dbReference type="NCBI Taxonomy" id="10593"/>
    <lineage>
        <taxon>Viruses</taxon>
        <taxon>Monodnaviria</taxon>
        <taxon>Shotokuvirae</taxon>
        <taxon>Cossaviricota</taxon>
        <taxon>Papovaviricetes</taxon>
        <taxon>Zurhausenvirales</taxon>
        <taxon>Papillomaviridae</taxon>
        <taxon>Firstpapillomavirinae</taxon>
        <taxon>Alphapapillomavirus</taxon>
        <taxon>Alphapapillomavirus 7</taxon>
    </lineage>
</organism>
<sequence>MARFDDPKQRPYKLPDLCTELNTSLQDVSIACVYCKATLERTEVYQFAFKDLCIVYRDCIAYAACHKCIDFYSRIRELRYYSNSVYGETLEKITNTELYNLLIRCLRCQKPLNPAEKRRHLKDKRRFHSIAGQYRGQCNTCCDQARQERLRRRRETQV</sequence>